<accession>Q8DLI9</accession>
<sequence length="353" mass="36922">MVRILAIETSCDETAAAVVRDRAIESNVIASQVCAHQPFGGVVPEVASRAHLENINGVITAAISEAGCDWSAIDAIAVTCAPGLVGSLLIGVTAAKTLALVHQKPLLGIHHLEGHLYASYLAEPTLEPPFLCLLVSGGHTSLIGVYGCGEYQLFGQTRDDAAGEAYDKVARLMGLGYPGGPLLDRWAQQGNPEAFDLPEGNIRLPDGKVHPYDASFSGLKTAVARLVAELRQTHPELPVADLAASFQKAVAQALTKRAIAAAVDHGFKTLAIGGGVAANSGLRQHLTAAAEPLGLRLIFPPLRLCTDNAAMIGCAAADHFQRGDRSPLDLTARSRLSLLEISALYGPTPLAVS</sequence>
<protein>
    <recommendedName>
        <fullName evidence="1">tRNA N6-adenosine threonylcarbamoyltransferase</fullName>
        <ecNumber evidence="1">2.3.1.234</ecNumber>
    </recommendedName>
    <alternativeName>
        <fullName evidence="1">N6-L-threonylcarbamoyladenine synthase</fullName>
        <shortName evidence="1">t(6)A synthase</shortName>
    </alternativeName>
    <alternativeName>
        <fullName evidence="1">t(6)A37 threonylcarbamoyladenosine biosynthesis protein TsaD</fullName>
    </alternativeName>
    <alternativeName>
        <fullName evidence="1">tRNA threonylcarbamoyladenosine biosynthesis protein TsaD</fullName>
    </alternativeName>
</protein>
<gene>
    <name evidence="1" type="primary">tsaD</name>
    <name type="synonym">gcp</name>
    <name type="ordered locus">tll0502</name>
</gene>
<reference key="1">
    <citation type="journal article" date="2002" name="DNA Res.">
        <title>Complete genome structure of the thermophilic cyanobacterium Thermosynechococcus elongatus BP-1.</title>
        <authorList>
            <person name="Nakamura Y."/>
            <person name="Kaneko T."/>
            <person name="Sato S."/>
            <person name="Ikeuchi M."/>
            <person name="Katoh H."/>
            <person name="Sasamoto S."/>
            <person name="Watanabe A."/>
            <person name="Iriguchi M."/>
            <person name="Kawashima K."/>
            <person name="Kimura T."/>
            <person name="Kishida Y."/>
            <person name="Kiyokawa C."/>
            <person name="Kohara M."/>
            <person name="Matsumoto M."/>
            <person name="Matsuno A."/>
            <person name="Nakazaki N."/>
            <person name="Shimpo S."/>
            <person name="Sugimoto M."/>
            <person name="Takeuchi C."/>
            <person name="Yamada M."/>
            <person name="Tabata S."/>
        </authorList>
    </citation>
    <scope>NUCLEOTIDE SEQUENCE [LARGE SCALE GENOMIC DNA]</scope>
    <source>
        <strain>NIES-2133 / IAM M-273 / BP-1</strain>
    </source>
</reference>
<proteinExistence type="inferred from homology"/>
<dbReference type="EC" id="2.3.1.234" evidence="1"/>
<dbReference type="EMBL" id="BA000039">
    <property type="protein sequence ID" value="BAC08054.1"/>
    <property type="molecule type" value="Genomic_DNA"/>
</dbReference>
<dbReference type="RefSeq" id="NP_681292.1">
    <property type="nucleotide sequence ID" value="NC_004113.1"/>
</dbReference>
<dbReference type="RefSeq" id="WP_011056353.1">
    <property type="nucleotide sequence ID" value="NC_004113.1"/>
</dbReference>
<dbReference type="SMR" id="Q8DLI9"/>
<dbReference type="STRING" id="197221.gene:10747091"/>
<dbReference type="EnsemblBacteria" id="BAC08054">
    <property type="protein sequence ID" value="BAC08054"/>
    <property type="gene ID" value="BAC08054"/>
</dbReference>
<dbReference type="KEGG" id="tel:tll0502"/>
<dbReference type="PATRIC" id="fig|197221.4.peg.528"/>
<dbReference type="eggNOG" id="COG0533">
    <property type="taxonomic scope" value="Bacteria"/>
</dbReference>
<dbReference type="Proteomes" id="UP000000440">
    <property type="component" value="Chromosome"/>
</dbReference>
<dbReference type="GO" id="GO:0005737">
    <property type="term" value="C:cytoplasm"/>
    <property type="evidence" value="ECO:0007669"/>
    <property type="project" value="UniProtKB-SubCell"/>
</dbReference>
<dbReference type="GO" id="GO:0005506">
    <property type="term" value="F:iron ion binding"/>
    <property type="evidence" value="ECO:0007669"/>
    <property type="project" value="UniProtKB-UniRule"/>
</dbReference>
<dbReference type="GO" id="GO:0061711">
    <property type="term" value="F:N(6)-L-threonylcarbamoyladenine synthase activity"/>
    <property type="evidence" value="ECO:0007669"/>
    <property type="project" value="UniProtKB-EC"/>
</dbReference>
<dbReference type="GO" id="GO:0002949">
    <property type="term" value="P:tRNA threonylcarbamoyladenosine modification"/>
    <property type="evidence" value="ECO:0007669"/>
    <property type="project" value="UniProtKB-UniRule"/>
</dbReference>
<dbReference type="CDD" id="cd24133">
    <property type="entry name" value="ASKHA_NBD_TsaD_bac"/>
    <property type="match status" value="1"/>
</dbReference>
<dbReference type="FunFam" id="3.30.420.40:FF:000040">
    <property type="entry name" value="tRNA N6-adenosine threonylcarbamoyltransferase"/>
    <property type="match status" value="1"/>
</dbReference>
<dbReference type="Gene3D" id="3.30.420.40">
    <property type="match status" value="2"/>
</dbReference>
<dbReference type="HAMAP" id="MF_01445">
    <property type="entry name" value="TsaD"/>
    <property type="match status" value="1"/>
</dbReference>
<dbReference type="InterPro" id="IPR043129">
    <property type="entry name" value="ATPase_NBD"/>
</dbReference>
<dbReference type="InterPro" id="IPR000905">
    <property type="entry name" value="Gcp-like_dom"/>
</dbReference>
<dbReference type="InterPro" id="IPR017861">
    <property type="entry name" value="KAE1/TsaD"/>
</dbReference>
<dbReference type="InterPro" id="IPR017860">
    <property type="entry name" value="Peptidase_M22_CS"/>
</dbReference>
<dbReference type="InterPro" id="IPR022450">
    <property type="entry name" value="TsaD"/>
</dbReference>
<dbReference type="NCBIfam" id="TIGR00329">
    <property type="entry name" value="gcp_kae1"/>
    <property type="match status" value="1"/>
</dbReference>
<dbReference type="NCBIfam" id="TIGR03723">
    <property type="entry name" value="T6A_TsaD_YgjD"/>
    <property type="match status" value="1"/>
</dbReference>
<dbReference type="PANTHER" id="PTHR11735">
    <property type="entry name" value="TRNA N6-ADENOSINE THREONYLCARBAMOYLTRANSFERASE"/>
    <property type="match status" value="1"/>
</dbReference>
<dbReference type="PANTHER" id="PTHR11735:SF6">
    <property type="entry name" value="TRNA N6-ADENOSINE THREONYLCARBAMOYLTRANSFERASE, MITOCHONDRIAL"/>
    <property type="match status" value="1"/>
</dbReference>
<dbReference type="Pfam" id="PF00814">
    <property type="entry name" value="TsaD"/>
    <property type="match status" value="1"/>
</dbReference>
<dbReference type="PRINTS" id="PR00789">
    <property type="entry name" value="OSIALOPTASE"/>
</dbReference>
<dbReference type="SUPFAM" id="SSF53067">
    <property type="entry name" value="Actin-like ATPase domain"/>
    <property type="match status" value="2"/>
</dbReference>
<dbReference type="PROSITE" id="PS01016">
    <property type="entry name" value="GLYCOPROTEASE"/>
    <property type="match status" value="1"/>
</dbReference>
<name>TSAD_THEVB</name>
<feature type="chain" id="PRO_0000303582" description="tRNA N6-adenosine threonylcarbamoyltransferase">
    <location>
        <begin position="1"/>
        <end position="353"/>
    </location>
</feature>
<feature type="binding site" evidence="1">
    <location>
        <position position="111"/>
    </location>
    <ligand>
        <name>Fe cation</name>
        <dbReference type="ChEBI" id="CHEBI:24875"/>
    </ligand>
</feature>
<feature type="binding site" evidence="1">
    <location>
        <position position="115"/>
    </location>
    <ligand>
        <name>Fe cation</name>
        <dbReference type="ChEBI" id="CHEBI:24875"/>
    </ligand>
</feature>
<feature type="binding site" evidence="1">
    <location>
        <begin position="134"/>
        <end position="138"/>
    </location>
    <ligand>
        <name>substrate</name>
    </ligand>
</feature>
<feature type="binding site" evidence="1">
    <location>
        <position position="167"/>
    </location>
    <ligand>
        <name>substrate</name>
    </ligand>
</feature>
<feature type="binding site" evidence="1">
    <location>
        <position position="180"/>
    </location>
    <ligand>
        <name>substrate</name>
    </ligand>
</feature>
<feature type="binding site" evidence="1">
    <location>
        <position position="184"/>
    </location>
    <ligand>
        <name>substrate</name>
    </ligand>
</feature>
<feature type="binding site" evidence="1">
    <location>
        <position position="279"/>
    </location>
    <ligand>
        <name>substrate</name>
    </ligand>
</feature>
<feature type="binding site" evidence="1">
    <location>
        <position position="307"/>
    </location>
    <ligand>
        <name>Fe cation</name>
        <dbReference type="ChEBI" id="CHEBI:24875"/>
    </ligand>
</feature>
<evidence type="ECO:0000255" key="1">
    <source>
        <dbReference type="HAMAP-Rule" id="MF_01445"/>
    </source>
</evidence>
<keyword id="KW-0012">Acyltransferase</keyword>
<keyword id="KW-0963">Cytoplasm</keyword>
<keyword id="KW-0408">Iron</keyword>
<keyword id="KW-0479">Metal-binding</keyword>
<keyword id="KW-1185">Reference proteome</keyword>
<keyword id="KW-0808">Transferase</keyword>
<keyword id="KW-0819">tRNA processing</keyword>
<comment type="function">
    <text evidence="1">Required for the formation of a threonylcarbamoyl group on adenosine at position 37 (t(6)A37) in tRNAs that read codons beginning with adenine. Is involved in the transfer of the threonylcarbamoyl moiety of threonylcarbamoyl-AMP (TC-AMP) to the N6 group of A37, together with TsaE and TsaB. TsaD likely plays a direct catalytic role in this reaction.</text>
</comment>
<comment type="catalytic activity">
    <reaction evidence="1">
        <text>L-threonylcarbamoyladenylate + adenosine(37) in tRNA = N(6)-L-threonylcarbamoyladenosine(37) in tRNA + AMP + H(+)</text>
        <dbReference type="Rhea" id="RHEA:37059"/>
        <dbReference type="Rhea" id="RHEA-COMP:10162"/>
        <dbReference type="Rhea" id="RHEA-COMP:10163"/>
        <dbReference type="ChEBI" id="CHEBI:15378"/>
        <dbReference type="ChEBI" id="CHEBI:73682"/>
        <dbReference type="ChEBI" id="CHEBI:74411"/>
        <dbReference type="ChEBI" id="CHEBI:74418"/>
        <dbReference type="ChEBI" id="CHEBI:456215"/>
        <dbReference type="EC" id="2.3.1.234"/>
    </reaction>
</comment>
<comment type="cofactor">
    <cofactor evidence="1">
        <name>Fe(2+)</name>
        <dbReference type="ChEBI" id="CHEBI:29033"/>
    </cofactor>
    <text evidence="1">Binds 1 Fe(2+) ion per subunit.</text>
</comment>
<comment type="subcellular location">
    <subcellularLocation>
        <location evidence="1">Cytoplasm</location>
    </subcellularLocation>
</comment>
<comment type="similarity">
    <text evidence="1">Belongs to the KAE1 / TsaD family.</text>
</comment>
<organism>
    <name type="scientific">Thermosynechococcus vestitus (strain NIES-2133 / IAM M-273 / BP-1)</name>
    <dbReference type="NCBI Taxonomy" id="197221"/>
    <lineage>
        <taxon>Bacteria</taxon>
        <taxon>Bacillati</taxon>
        <taxon>Cyanobacteriota</taxon>
        <taxon>Cyanophyceae</taxon>
        <taxon>Acaryochloridales</taxon>
        <taxon>Thermosynechococcaceae</taxon>
        <taxon>Thermosynechococcus</taxon>
    </lineage>
</organism>